<comment type="function">
    <text evidence="1">Converts 2C-methyl-D-erythritol 2,4-cyclodiphosphate (ME-2,4cPP) into 1-hydroxy-2-methyl-2-(E)-butenyl 4-diphosphate.</text>
</comment>
<comment type="catalytic activity">
    <reaction evidence="1">
        <text>(2E)-4-hydroxy-3-methylbut-2-enyl diphosphate + 2 oxidized [2Fe-2S]-[ferredoxin] + H2O = 2-C-methyl-D-erythritol 2,4-cyclic diphosphate + 2 reduced [2Fe-2S]-[ferredoxin] + H(+)</text>
        <dbReference type="Rhea" id="RHEA:26119"/>
        <dbReference type="Rhea" id="RHEA-COMP:10000"/>
        <dbReference type="Rhea" id="RHEA-COMP:10001"/>
        <dbReference type="ChEBI" id="CHEBI:15377"/>
        <dbReference type="ChEBI" id="CHEBI:15378"/>
        <dbReference type="ChEBI" id="CHEBI:33737"/>
        <dbReference type="ChEBI" id="CHEBI:33738"/>
        <dbReference type="ChEBI" id="CHEBI:58483"/>
        <dbReference type="ChEBI" id="CHEBI:128753"/>
        <dbReference type="EC" id="1.17.7.1"/>
    </reaction>
</comment>
<comment type="cofactor">
    <cofactor evidence="1">
        <name>[4Fe-4S] cluster</name>
        <dbReference type="ChEBI" id="CHEBI:49883"/>
    </cofactor>
    <text evidence="1">Binds 1 [4Fe-4S] cluster.</text>
</comment>
<comment type="pathway">
    <text evidence="1">Isoprenoid biosynthesis; isopentenyl diphosphate biosynthesis via DXP pathway; isopentenyl diphosphate from 1-deoxy-D-xylulose 5-phosphate: step 5/6.</text>
</comment>
<comment type="similarity">
    <text evidence="1">Belongs to the IspG family.</text>
</comment>
<keyword id="KW-0004">4Fe-4S</keyword>
<keyword id="KW-0408">Iron</keyword>
<keyword id="KW-0411">Iron-sulfur</keyword>
<keyword id="KW-0414">Isoprene biosynthesis</keyword>
<keyword id="KW-0479">Metal-binding</keyword>
<keyword id="KW-0560">Oxidoreductase</keyword>
<organism>
    <name type="scientific">Trichormus variabilis (strain ATCC 29413 / PCC 7937)</name>
    <name type="common">Anabaena variabilis</name>
    <dbReference type="NCBI Taxonomy" id="240292"/>
    <lineage>
        <taxon>Bacteria</taxon>
        <taxon>Bacillati</taxon>
        <taxon>Cyanobacteriota</taxon>
        <taxon>Cyanophyceae</taxon>
        <taxon>Nostocales</taxon>
        <taxon>Nostocaceae</taxon>
        <taxon>Trichormus</taxon>
    </lineage>
</organism>
<reference key="1">
    <citation type="journal article" date="2014" name="Stand. Genomic Sci.">
        <title>Complete genome sequence of Anabaena variabilis ATCC 29413.</title>
        <authorList>
            <person name="Thiel T."/>
            <person name="Pratte B.S."/>
            <person name="Zhong J."/>
            <person name="Goodwin L."/>
            <person name="Copeland A."/>
            <person name="Lucas S."/>
            <person name="Han C."/>
            <person name="Pitluck S."/>
            <person name="Land M.L."/>
            <person name="Kyrpides N.C."/>
            <person name="Woyke T."/>
        </authorList>
    </citation>
    <scope>NUCLEOTIDE SEQUENCE [LARGE SCALE GENOMIC DNA]</scope>
    <source>
        <strain>ATCC 29413 / PCC 7937</strain>
    </source>
</reference>
<feature type="chain" id="PRO_1000011434" description="4-hydroxy-3-methylbut-2-en-1-yl diphosphate synthase (ferredoxin)">
    <location>
        <begin position="1"/>
        <end position="408"/>
    </location>
</feature>
<feature type="region of interest" description="Disordered" evidence="2">
    <location>
        <begin position="1"/>
        <end position="26"/>
    </location>
</feature>
<feature type="compositionally biased region" description="Polar residues" evidence="2">
    <location>
        <begin position="1"/>
        <end position="21"/>
    </location>
</feature>
<feature type="binding site" evidence="1">
    <location>
        <position position="317"/>
    </location>
    <ligand>
        <name>[4Fe-4S] cluster</name>
        <dbReference type="ChEBI" id="CHEBI:49883"/>
    </ligand>
</feature>
<feature type="binding site" evidence="1">
    <location>
        <position position="320"/>
    </location>
    <ligand>
        <name>[4Fe-4S] cluster</name>
        <dbReference type="ChEBI" id="CHEBI:49883"/>
    </ligand>
</feature>
<feature type="binding site" evidence="1">
    <location>
        <position position="351"/>
    </location>
    <ligand>
        <name>[4Fe-4S] cluster</name>
        <dbReference type="ChEBI" id="CHEBI:49883"/>
    </ligand>
</feature>
<feature type="binding site" evidence="1">
    <location>
        <position position="358"/>
    </location>
    <ligand>
        <name>[4Fe-4S] cluster</name>
        <dbReference type="ChEBI" id="CHEBI:49883"/>
    </ligand>
</feature>
<name>ISPG_TRIV2</name>
<accession>Q3MG27</accession>
<gene>
    <name evidence="1" type="primary">ispG</name>
    <name type="ordered locus">Ava_0433</name>
</gene>
<proteinExistence type="inferred from homology"/>
<evidence type="ECO:0000255" key="1">
    <source>
        <dbReference type="HAMAP-Rule" id="MF_00159"/>
    </source>
</evidence>
<evidence type="ECO:0000256" key="2">
    <source>
        <dbReference type="SAM" id="MobiDB-lite"/>
    </source>
</evidence>
<sequence>MQTLPTPTTSSNTANQSTFDTTIKRRKTRPVKVGNVTIGGGYPVVVQSMINEDTLDIDGSVAAIRRLHEIGCEIVRVTVPSIAHAVALAEIKQKLITTYQDVPIVADVHHNGMKIALEVAKHIEKVRINPGLYVFEKPNTNRTEYTQAEFEEIGEKIRETLAPLVITLRDQGKAMRIGVNHGSLAERMLFTYGDTPEGMVESALEFIRICESLDFRNIVISMKASRVPVMVAAYRLMAKRMDDLGMDYPLHLGVTEAGDGEYGRIKSTAGIATLLADGIGDTIRVSLTEAPEKEIPVCYSILQALGLRKTMVEYVACPSCGRTLFNLEEVLHKVRESTKHLTGLDIAVMGCIVNGPGEMADADYGYVGKTPGYISLYRGREEIKKVPEDKGVEELINLIKADGRWVDP</sequence>
<dbReference type="EC" id="1.17.7.1" evidence="1"/>
<dbReference type="EMBL" id="CP000117">
    <property type="protein sequence ID" value="ABA20059.1"/>
    <property type="molecule type" value="Genomic_DNA"/>
</dbReference>
<dbReference type="SMR" id="Q3MG27"/>
<dbReference type="STRING" id="240292.Ava_0433"/>
<dbReference type="KEGG" id="ava:Ava_0433"/>
<dbReference type="eggNOG" id="COG0821">
    <property type="taxonomic scope" value="Bacteria"/>
</dbReference>
<dbReference type="HOGENOM" id="CLU_042258_0_0_3"/>
<dbReference type="UniPathway" id="UPA00056">
    <property type="reaction ID" value="UER00096"/>
</dbReference>
<dbReference type="Proteomes" id="UP000002533">
    <property type="component" value="Chromosome"/>
</dbReference>
<dbReference type="GO" id="GO:0051539">
    <property type="term" value="F:4 iron, 4 sulfur cluster binding"/>
    <property type="evidence" value="ECO:0007669"/>
    <property type="project" value="UniProtKB-UniRule"/>
</dbReference>
<dbReference type="GO" id="GO:0046429">
    <property type="term" value="F:4-hydroxy-3-methylbut-2-en-1-yl diphosphate synthase activity (ferredoxin)"/>
    <property type="evidence" value="ECO:0007669"/>
    <property type="project" value="UniProtKB-UniRule"/>
</dbReference>
<dbReference type="GO" id="GO:0005506">
    <property type="term" value="F:iron ion binding"/>
    <property type="evidence" value="ECO:0007669"/>
    <property type="project" value="InterPro"/>
</dbReference>
<dbReference type="GO" id="GO:0019288">
    <property type="term" value="P:isopentenyl diphosphate biosynthetic process, methylerythritol 4-phosphate pathway"/>
    <property type="evidence" value="ECO:0007669"/>
    <property type="project" value="UniProtKB-UniRule"/>
</dbReference>
<dbReference type="GO" id="GO:0016114">
    <property type="term" value="P:terpenoid biosynthetic process"/>
    <property type="evidence" value="ECO:0007669"/>
    <property type="project" value="InterPro"/>
</dbReference>
<dbReference type="FunFam" id="3.20.20.20:FF:000005">
    <property type="entry name" value="4-hydroxy-3-methylbut-2-en-1-yl diphosphate synthase (flavodoxin)"/>
    <property type="match status" value="1"/>
</dbReference>
<dbReference type="FunFam" id="3.30.413.10:FF:000006">
    <property type="entry name" value="4-hydroxy-3-methylbut-2-en-1-yl diphosphate synthase (flavodoxin)"/>
    <property type="match status" value="1"/>
</dbReference>
<dbReference type="Gene3D" id="3.20.20.20">
    <property type="entry name" value="Dihydropteroate synthase-like"/>
    <property type="match status" value="1"/>
</dbReference>
<dbReference type="Gene3D" id="3.30.413.10">
    <property type="entry name" value="Sulfite Reductase Hemoprotein, domain 1"/>
    <property type="match status" value="1"/>
</dbReference>
<dbReference type="HAMAP" id="MF_00159">
    <property type="entry name" value="IspG"/>
    <property type="match status" value="1"/>
</dbReference>
<dbReference type="InterPro" id="IPR011005">
    <property type="entry name" value="Dihydropteroate_synth-like_sf"/>
</dbReference>
<dbReference type="InterPro" id="IPR016425">
    <property type="entry name" value="IspG_bac"/>
</dbReference>
<dbReference type="InterPro" id="IPR004588">
    <property type="entry name" value="IspG_bac-typ"/>
</dbReference>
<dbReference type="InterPro" id="IPR045854">
    <property type="entry name" value="NO2/SO3_Rdtase_4Fe4S_sf"/>
</dbReference>
<dbReference type="NCBIfam" id="TIGR00612">
    <property type="entry name" value="ispG_gcpE"/>
    <property type="match status" value="1"/>
</dbReference>
<dbReference type="NCBIfam" id="NF001540">
    <property type="entry name" value="PRK00366.1"/>
    <property type="match status" value="1"/>
</dbReference>
<dbReference type="PANTHER" id="PTHR30454">
    <property type="entry name" value="4-HYDROXY-3-METHYLBUT-2-EN-1-YL DIPHOSPHATE SYNTHASE"/>
    <property type="match status" value="1"/>
</dbReference>
<dbReference type="PANTHER" id="PTHR30454:SF0">
    <property type="entry name" value="4-HYDROXY-3-METHYLBUT-2-EN-1-YL DIPHOSPHATE SYNTHASE (FERREDOXIN), CHLOROPLASTIC"/>
    <property type="match status" value="1"/>
</dbReference>
<dbReference type="Pfam" id="PF04551">
    <property type="entry name" value="GcpE"/>
    <property type="match status" value="1"/>
</dbReference>
<dbReference type="PIRSF" id="PIRSF004640">
    <property type="entry name" value="IspG"/>
    <property type="match status" value="1"/>
</dbReference>
<dbReference type="SUPFAM" id="SSF51717">
    <property type="entry name" value="Dihydropteroate synthetase-like"/>
    <property type="match status" value="1"/>
</dbReference>
<dbReference type="SUPFAM" id="SSF56014">
    <property type="entry name" value="Nitrite and sulphite reductase 4Fe-4S domain-like"/>
    <property type="match status" value="1"/>
</dbReference>
<protein>
    <recommendedName>
        <fullName evidence="1">4-hydroxy-3-methylbut-2-en-1-yl diphosphate synthase (ferredoxin)</fullName>
        <ecNumber evidence="1">1.17.7.1</ecNumber>
    </recommendedName>
    <alternativeName>
        <fullName evidence="1">1-hydroxy-2-methyl-2-(E)-butenyl 4-diphosphate synthase</fullName>
    </alternativeName>
</protein>